<evidence type="ECO:0000255" key="1">
    <source>
        <dbReference type="HAMAP-Rule" id="MF_01250"/>
    </source>
</evidence>
<keyword id="KW-0378">Hydrolase</keyword>
<keyword id="KW-0460">Magnesium</keyword>
<accession>C1KYP8</accession>
<protein>
    <recommendedName>
        <fullName evidence="1">Pyrophosphatase PpaX</fullName>
        <ecNumber evidence="1">3.6.1.1</ecNumber>
    </recommendedName>
</protein>
<organism>
    <name type="scientific">Listeria monocytogenes serotype 4b (strain CLIP80459)</name>
    <dbReference type="NCBI Taxonomy" id="568819"/>
    <lineage>
        <taxon>Bacteria</taxon>
        <taxon>Bacillati</taxon>
        <taxon>Bacillota</taxon>
        <taxon>Bacilli</taxon>
        <taxon>Bacillales</taxon>
        <taxon>Listeriaceae</taxon>
        <taxon>Listeria</taxon>
    </lineage>
</organism>
<comment type="function">
    <text evidence="1">Hydrolyzes pyrophosphate formed during P-Ser-HPr dephosphorylation by HPrK/P. Might play a role in controlling the intracellular pyrophosphate pool.</text>
</comment>
<comment type="catalytic activity">
    <reaction evidence="1">
        <text>diphosphate + H2O = 2 phosphate + H(+)</text>
        <dbReference type="Rhea" id="RHEA:24576"/>
        <dbReference type="ChEBI" id="CHEBI:15377"/>
        <dbReference type="ChEBI" id="CHEBI:15378"/>
        <dbReference type="ChEBI" id="CHEBI:33019"/>
        <dbReference type="ChEBI" id="CHEBI:43474"/>
        <dbReference type="EC" id="3.6.1.1"/>
    </reaction>
</comment>
<comment type="cofactor">
    <cofactor evidence="1">
        <name>Mg(2+)</name>
        <dbReference type="ChEBI" id="CHEBI:18420"/>
    </cofactor>
</comment>
<comment type="similarity">
    <text evidence="1">Belongs to the HAD-like hydrolase superfamily. PpaX family.</text>
</comment>
<dbReference type="EC" id="3.6.1.1" evidence="1"/>
<dbReference type="EMBL" id="FM242711">
    <property type="protein sequence ID" value="CAS06205.1"/>
    <property type="molecule type" value="Genomic_DNA"/>
</dbReference>
<dbReference type="RefSeq" id="WP_003725414.1">
    <property type="nucleotide sequence ID" value="NC_012488.1"/>
</dbReference>
<dbReference type="SMR" id="C1KYP8"/>
<dbReference type="KEGG" id="lmc:Lm4b_02450"/>
<dbReference type="HOGENOM" id="CLU_045011_19_3_9"/>
<dbReference type="GO" id="GO:0005829">
    <property type="term" value="C:cytosol"/>
    <property type="evidence" value="ECO:0007669"/>
    <property type="project" value="TreeGrafter"/>
</dbReference>
<dbReference type="GO" id="GO:0004427">
    <property type="term" value="F:inorganic diphosphate phosphatase activity"/>
    <property type="evidence" value="ECO:0007669"/>
    <property type="project" value="UniProtKB-UniRule"/>
</dbReference>
<dbReference type="GO" id="GO:0000287">
    <property type="term" value="F:magnesium ion binding"/>
    <property type="evidence" value="ECO:0007669"/>
    <property type="project" value="UniProtKB-UniRule"/>
</dbReference>
<dbReference type="GO" id="GO:0008967">
    <property type="term" value="F:phosphoglycolate phosphatase activity"/>
    <property type="evidence" value="ECO:0007669"/>
    <property type="project" value="TreeGrafter"/>
</dbReference>
<dbReference type="GO" id="GO:0006281">
    <property type="term" value="P:DNA repair"/>
    <property type="evidence" value="ECO:0007669"/>
    <property type="project" value="TreeGrafter"/>
</dbReference>
<dbReference type="CDD" id="cd02616">
    <property type="entry name" value="HAD_PPase"/>
    <property type="match status" value="1"/>
</dbReference>
<dbReference type="FunFam" id="3.40.50.1000:FF:000022">
    <property type="entry name" value="Phosphoglycolate phosphatase"/>
    <property type="match status" value="1"/>
</dbReference>
<dbReference type="Gene3D" id="3.40.50.1000">
    <property type="entry name" value="HAD superfamily/HAD-like"/>
    <property type="match status" value="1"/>
</dbReference>
<dbReference type="Gene3D" id="1.10.150.240">
    <property type="entry name" value="Putative phosphatase, domain 2"/>
    <property type="match status" value="1"/>
</dbReference>
<dbReference type="HAMAP" id="MF_01250">
    <property type="entry name" value="Pyrophosphat_PpaX"/>
    <property type="match status" value="1"/>
</dbReference>
<dbReference type="InterPro" id="IPR050155">
    <property type="entry name" value="HAD-like_hydrolase_sf"/>
</dbReference>
<dbReference type="InterPro" id="IPR036412">
    <property type="entry name" value="HAD-like_sf"/>
</dbReference>
<dbReference type="InterPro" id="IPR006439">
    <property type="entry name" value="HAD-SF_hydro_IA"/>
</dbReference>
<dbReference type="InterPro" id="IPR041492">
    <property type="entry name" value="HAD_2"/>
</dbReference>
<dbReference type="InterPro" id="IPR023214">
    <property type="entry name" value="HAD_sf"/>
</dbReference>
<dbReference type="InterPro" id="IPR023198">
    <property type="entry name" value="PGP-like_dom2"/>
</dbReference>
<dbReference type="InterPro" id="IPR023733">
    <property type="entry name" value="Pyrophosphatase_Ppax"/>
</dbReference>
<dbReference type="NCBIfam" id="TIGR01549">
    <property type="entry name" value="HAD-SF-IA-v1"/>
    <property type="match status" value="1"/>
</dbReference>
<dbReference type="NCBIfam" id="NF009804">
    <property type="entry name" value="PRK13288.1"/>
    <property type="match status" value="1"/>
</dbReference>
<dbReference type="PANTHER" id="PTHR43434">
    <property type="entry name" value="PHOSPHOGLYCOLATE PHOSPHATASE"/>
    <property type="match status" value="1"/>
</dbReference>
<dbReference type="PANTHER" id="PTHR43434:SF26">
    <property type="entry name" value="PYROPHOSPHATASE PPAX"/>
    <property type="match status" value="1"/>
</dbReference>
<dbReference type="Pfam" id="PF13419">
    <property type="entry name" value="HAD_2"/>
    <property type="match status" value="1"/>
</dbReference>
<dbReference type="PRINTS" id="PR00413">
    <property type="entry name" value="HADHALOGNASE"/>
</dbReference>
<dbReference type="SFLD" id="SFLDG01135">
    <property type="entry name" value="C1.5.6:_HAD__Beta-PGM__Phospha"/>
    <property type="match status" value="1"/>
</dbReference>
<dbReference type="SFLD" id="SFLDS00003">
    <property type="entry name" value="Haloacid_Dehalogenase"/>
    <property type="match status" value="1"/>
</dbReference>
<dbReference type="SUPFAM" id="SSF56784">
    <property type="entry name" value="HAD-like"/>
    <property type="match status" value="1"/>
</dbReference>
<gene>
    <name evidence="1" type="primary">ppaX</name>
    <name type="ordered locus">Lm4b_02450</name>
</gene>
<feature type="chain" id="PRO_1000214113" description="Pyrophosphatase PpaX">
    <location>
        <begin position="1"/>
        <end position="217"/>
    </location>
</feature>
<feature type="active site" description="Nucleophile" evidence="1">
    <location>
        <position position="11"/>
    </location>
</feature>
<reference key="1">
    <citation type="journal article" date="2012" name="BMC Genomics">
        <title>Comparative genomics and transcriptomics of lineages I, II, and III strains of Listeria monocytogenes.</title>
        <authorList>
            <person name="Hain T."/>
            <person name="Ghai R."/>
            <person name="Billion A."/>
            <person name="Kuenne C.T."/>
            <person name="Steinweg C."/>
            <person name="Izar B."/>
            <person name="Mohamed W."/>
            <person name="Mraheil M."/>
            <person name="Domann E."/>
            <person name="Schaffrath S."/>
            <person name="Karst U."/>
            <person name="Goesmann A."/>
            <person name="Oehm S."/>
            <person name="Puhler A."/>
            <person name="Merkl R."/>
            <person name="Vorwerk S."/>
            <person name="Glaser P."/>
            <person name="Garrido P."/>
            <person name="Rusniok C."/>
            <person name="Buchrieser C."/>
            <person name="Goebel W."/>
            <person name="Chakraborty T."/>
        </authorList>
    </citation>
    <scope>NUCLEOTIDE SEQUENCE [LARGE SCALE GENOMIC DNA]</scope>
    <source>
        <strain>CLIP80459</strain>
    </source>
</reference>
<proteinExistence type="inferred from homology"/>
<sequence length="217" mass="24764">MTGKITTLLFDLDGTLINTNELIIKTFQVTFQEFMPDRVFTREDILPFIGPSLMETFREINPAHADEMRAFYREYNLKHHDDLILEYDGVYEAIRALYEEDYKLGIVSTKMYDTIMRGLKVTGLDKFFQVVIGLDQVSNAKPDPEGIEMALSLLNATKEEAIMIGDNYHDIEAGKNAETLTAGVAWAIKGPEHLAQFQPDFMLEKMSDLLAIVRDEE</sequence>
<name>PPAX_LISMC</name>